<protein>
    <recommendedName>
        <fullName>Calmodulin-2</fullName>
        <shortName>CaM-2</shortName>
    </recommendedName>
</protein>
<sequence length="149" mass="16818">MADQLTDEQIAEFKEAFSLFDKDGDGCITTKELGTVMRSLGQNPTEAELQDMINEVDADGNGTIDFPEFLNLMAKKMKDTDSEEELKEAFRVFDKDQNGFISAAELRHVMTNLGEKLTDEEVDEMIREADVDGDGQINYEEFVKVMMAK</sequence>
<accession>A2Y609</accession>
<proteinExistence type="inferred from homology"/>
<name>CALM2_ORYSI</name>
<organism>
    <name type="scientific">Oryza sativa subsp. indica</name>
    <name type="common">Rice</name>
    <dbReference type="NCBI Taxonomy" id="39946"/>
    <lineage>
        <taxon>Eukaryota</taxon>
        <taxon>Viridiplantae</taxon>
        <taxon>Streptophyta</taxon>
        <taxon>Embryophyta</taxon>
        <taxon>Tracheophyta</taxon>
        <taxon>Spermatophyta</taxon>
        <taxon>Magnoliopsida</taxon>
        <taxon>Liliopsida</taxon>
        <taxon>Poales</taxon>
        <taxon>Poaceae</taxon>
        <taxon>BOP clade</taxon>
        <taxon>Oryzoideae</taxon>
        <taxon>Oryzeae</taxon>
        <taxon>Oryzinae</taxon>
        <taxon>Oryza</taxon>
        <taxon>Oryza sativa</taxon>
    </lineage>
</organism>
<evidence type="ECO:0000250" key="1"/>
<evidence type="ECO:0000255" key="2">
    <source>
        <dbReference type="PROSITE-ProRule" id="PRU00448"/>
    </source>
</evidence>
<evidence type="ECO:0000305" key="3"/>
<comment type="function">
    <text>Calmodulin mediates the control of a large number of enzymes, ion channels and other proteins by Ca(2+). Among the enzymes to be stimulated by the calmodulin-Ca(2+) complex are a number of protein kinases and phosphatases.</text>
</comment>
<comment type="miscellaneous">
    <text>This protein has four functional calcium-binding sites.</text>
</comment>
<comment type="similarity">
    <text evidence="3">Belongs to the calmodulin family.</text>
</comment>
<dbReference type="EMBL" id="CM000130">
    <property type="protein sequence ID" value="EAY98519.1"/>
    <property type="molecule type" value="Genomic_DNA"/>
</dbReference>
<dbReference type="SMR" id="A2Y609"/>
<dbReference type="STRING" id="39946.A2Y609"/>
<dbReference type="iPTMnet" id="A2Y609"/>
<dbReference type="EnsemblPlants" id="BGIOSGA017813-TA">
    <property type="protein sequence ID" value="BGIOSGA017813-PA"/>
    <property type="gene ID" value="BGIOSGA017813"/>
</dbReference>
<dbReference type="EnsemblPlants" id="OsGoSa_05g0021690.01">
    <property type="protein sequence ID" value="OsGoSa_05g0021690.01"/>
    <property type="gene ID" value="OsGoSa_05g0021690"/>
</dbReference>
<dbReference type="EnsemblPlants" id="OsIR64_05g0021360.01">
    <property type="protein sequence ID" value="OsIR64_05g0021360.01"/>
    <property type="gene ID" value="OsIR64_05g0021360"/>
</dbReference>
<dbReference type="EnsemblPlants" id="OsKYG_05g0021590.01">
    <property type="protein sequence ID" value="OsKYG_05g0021590.01"/>
    <property type="gene ID" value="OsKYG_05g0021590"/>
</dbReference>
<dbReference type="EnsemblPlants" id="OsLaMu_05g0021740.01">
    <property type="protein sequence ID" value="OsLaMu_05g0021740.01"/>
    <property type="gene ID" value="OsLaMu_05g0021740"/>
</dbReference>
<dbReference type="EnsemblPlants" id="OsLima_05g0021660.01">
    <property type="protein sequence ID" value="OsLima_05g0021660.01"/>
    <property type="gene ID" value="OsLima_05g0021660"/>
</dbReference>
<dbReference type="EnsemblPlants" id="OsLiXu_05g0021760.01">
    <property type="protein sequence ID" value="OsLiXu_05g0021760.01"/>
    <property type="gene ID" value="OsLiXu_05g0021760"/>
</dbReference>
<dbReference type="EnsemblPlants" id="OsMH63_05G021750_02">
    <property type="protein sequence ID" value="OsMH63_05G021750_02"/>
    <property type="gene ID" value="OsMH63_05G021750"/>
</dbReference>
<dbReference type="EnsemblPlants" id="OsPr106_05g0021810.01">
    <property type="protein sequence ID" value="OsPr106_05g0021810.01"/>
    <property type="gene ID" value="OsPr106_05g0021810"/>
</dbReference>
<dbReference type="EnsemblPlants" id="OsZS97_05G021990_03">
    <property type="protein sequence ID" value="OsZS97_05G021990_03"/>
    <property type="gene ID" value="OsZS97_05G021990"/>
</dbReference>
<dbReference type="Gramene" id="BGIOSGA017813-TA">
    <property type="protein sequence ID" value="BGIOSGA017813-PA"/>
    <property type="gene ID" value="BGIOSGA017813"/>
</dbReference>
<dbReference type="Gramene" id="OsGoSa_05g0021690.01">
    <property type="protein sequence ID" value="OsGoSa_05g0021690.01"/>
    <property type="gene ID" value="OsGoSa_05g0021690"/>
</dbReference>
<dbReference type="Gramene" id="OsIR64_05g0021360.01">
    <property type="protein sequence ID" value="OsIR64_05g0021360.01"/>
    <property type="gene ID" value="OsIR64_05g0021360"/>
</dbReference>
<dbReference type="Gramene" id="OsKYG_05g0021590.01">
    <property type="protein sequence ID" value="OsKYG_05g0021590.01"/>
    <property type="gene ID" value="OsKYG_05g0021590"/>
</dbReference>
<dbReference type="Gramene" id="OsLaMu_05g0021740.01">
    <property type="protein sequence ID" value="OsLaMu_05g0021740.01"/>
    <property type="gene ID" value="OsLaMu_05g0021740"/>
</dbReference>
<dbReference type="Gramene" id="OsLima_05g0021660.01">
    <property type="protein sequence ID" value="OsLima_05g0021660.01"/>
    <property type="gene ID" value="OsLima_05g0021660"/>
</dbReference>
<dbReference type="Gramene" id="OsLiXu_05g0021760.01">
    <property type="protein sequence ID" value="OsLiXu_05g0021760.01"/>
    <property type="gene ID" value="OsLiXu_05g0021760"/>
</dbReference>
<dbReference type="Gramene" id="OsMH63_05G021750_02">
    <property type="protein sequence ID" value="OsMH63_05G021750_02"/>
    <property type="gene ID" value="OsMH63_05G021750"/>
</dbReference>
<dbReference type="Gramene" id="OsPr106_05g0021810.01">
    <property type="protein sequence ID" value="OsPr106_05g0021810.01"/>
    <property type="gene ID" value="OsPr106_05g0021810"/>
</dbReference>
<dbReference type="Gramene" id="OsZS97_05G021990_03">
    <property type="protein sequence ID" value="OsZS97_05G021990_03"/>
    <property type="gene ID" value="OsZS97_05G021990"/>
</dbReference>
<dbReference type="HOGENOM" id="CLU_061288_2_0_1"/>
<dbReference type="OMA" id="DEMIREP"/>
<dbReference type="OrthoDB" id="727752at2759"/>
<dbReference type="Proteomes" id="UP000007015">
    <property type="component" value="Chromosome 5"/>
</dbReference>
<dbReference type="GO" id="GO:0016460">
    <property type="term" value="C:myosin II complex"/>
    <property type="evidence" value="ECO:0007669"/>
    <property type="project" value="TreeGrafter"/>
</dbReference>
<dbReference type="GO" id="GO:0005509">
    <property type="term" value="F:calcium ion binding"/>
    <property type="evidence" value="ECO:0007669"/>
    <property type="project" value="InterPro"/>
</dbReference>
<dbReference type="CDD" id="cd00051">
    <property type="entry name" value="EFh"/>
    <property type="match status" value="2"/>
</dbReference>
<dbReference type="FunFam" id="1.10.238.10:FF:000034">
    <property type="entry name" value="Calmodulin"/>
    <property type="match status" value="1"/>
</dbReference>
<dbReference type="FunFam" id="1.10.238.10:FF:000042">
    <property type="entry name" value="Calmodulin"/>
    <property type="match status" value="1"/>
</dbReference>
<dbReference type="Gene3D" id="1.10.238.10">
    <property type="entry name" value="EF-hand"/>
    <property type="match status" value="3"/>
</dbReference>
<dbReference type="InterPro" id="IPR050230">
    <property type="entry name" value="CALM/Myosin/TropC-like"/>
</dbReference>
<dbReference type="InterPro" id="IPR011992">
    <property type="entry name" value="EF-hand-dom_pair"/>
</dbReference>
<dbReference type="InterPro" id="IPR018247">
    <property type="entry name" value="EF_Hand_1_Ca_BS"/>
</dbReference>
<dbReference type="InterPro" id="IPR002048">
    <property type="entry name" value="EF_hand_dom"/>
</dbReference>
<dbReference type="PANTHER" id="PTHR23048:SF53">
    <property type="entry name" value="CALMODULIN"/>
    <property type="match status" value="1"/>
</dbReference>
<dbReference type="PANTHER" id="PTHR23048">
    <property type="entry name" value="MYOSIN LIGHT CHAIN 1, 3"/>
    <property type="match status" value="1"/>
</dbReference>
<dbReference type="Pfam" id="PF13499">
    <property type="entry name" value="EF-hand_7"/>
    <property type="match status" value="2"/>
</dbReference>
<dbReference type="SMART" id="SM00054">
    <property type="entry name" value="EFh"/>
    <property type="match status" value="4"/>
</dbReference>
<dbReference type="SUPFAM" id="SSF47473">
    <property type="entry name" value="EF-hand"/>
    <property type="match status" value="1"/>
</dbReference>
<dbReference type="PROSITE" id="PS00018">
    <property type="entry name" value="EF_HAND_1"/>
    <property type="match status" value="4"/>
</dbReference>
<dbReference type="PROSITE" id="PS50222">
    <property type="entry name" value="EF_HAND_2"/>
    <property type="match status" value="4"/>
</dbReference>
<gene>
    <name type="primary">CAM2</name>
    <name type="synonym">CAM</name>
    <name type="ORF">OsI_019752</name>
</gene>
<reference key="1">
    <citation type="journal article" date="2005" name="PLoS Biol.">
        <title>The genomes of Oryza sativa: a history of duplications.</title>
        <authorList>
            <person name="Yu J."/>
            <person name="Wang J."/>
            <person name="Lin W."/>
            <person name="Li S."/>
            <person name="Li H."/>
            <person name="Zhou J."/>
            <person name="Ni P."/>
            <person name="Dong W."/>
            <person name="Hu S."/>
            <person name="Zeng C."/>
            <person name="Zhang J."/>
            <person name="Zhang Y."/>
            <person name="Li R."/>
            <person name="Xu Z."/>
            <person name="Li S."/>
            <person name="Li X."/>
            <person name="Zheng H."/>
            <person name="Cong L."/>
            <person name="Lin L."/>
            <person name="Yin J."/>
            <person name="Geng J."/>
            <person name="Li G."/>
            <person name="Shi J."/>
            <person name="Liu J."/>
            <person name="Lv H."/>
            <person name="Li J."/>
            <person name="Wang J."/>
            <person name="Deng Y."/>
            <person name="Ran L."/>
            <person name="Shi X."/>
            <person name="Wang X."/>
            <person name="Wu Q."/>
            <person name="Li C."/>
            <person name="Ren X."/>
            <person name="Wang J."/>
            <person name="Wang X."/>
            <person name="Li D."/>
            <person name="Liu D."/>
            <person name="Zhang X."/>
            <person name="Ji Z."/>
            <person name="Zhao W."/>
            <person name="Sun Y."/>
            <person name="Zhang Z."/>
            <person name="Bao J."/>
            <person name="Han Y."/>
            <person name="Dong L."/>
            <person name="Ji J."/>
            <person name="Chen P."/>
            <person name="Wu S."/>
            <person name="Liu J."/>
            <person name="Xiao Y."/>
            <person name="Bu D."/>
            <person name="Tan J."/>
            <person name="Yang L."/>
            <person name="Ye C."/>
            <person name="Zhang J."/>
            <person name="Xu J."/>
            <person name="Zhou Y."/>
            <person name="Yu Y."/>
            <person name="Zhang B."/>
            <person name="Zhuang S."/>
            <person name="Wei H."/>
            <person name="Liu B."/>
            <person name="Lei M."/>
            <person name="Yu H."/>
            <person name="Li Y."/>
            <person name="Xu H."/>
            <person name="Wei S."/>
            <person name="He X."/>
            <person name="Fang L."/>
            <person name="Zhang Z."/>
            <person name="Zhang Y."/>
            <person name="Huang X."/>
            <person name="Su Z."/>
            <person name="Tong W."/>
            <person name="Li J."/>
            <person name="Tong Z."/>
            <person name="Li S."/>
            <person name="Ye J."/>
            <person name="Wang L."/>
            <person name="Fang L."/>
            <person name="Lei T."/>
            <person name="Chen C.-S."/>
            <person name="Chen H.-C."/>
            <person name="Xu Z."/>
            <person name="Li H."/>
            <person name="Huang H."/>
            <person name="Zhang F."/>
            <person name="Xu H."/>
            <person name="Li N."/>
            <person name="Zhao C."/>
            <person name="Li S."/>
            <person name="Dong L."/>
            <person name="Huang Y."/>
            <person name="Li L."/>
            <person name="Xi Y."/>
            <person name="Qi Q."/>
            <person name="Li W."/>
            <person name="Zhang B."/>
            <person name="Hu W."/>
            <person name="Zhang Y."/>
            <person name="Tian X."/>
            <person name="Jiao Y."/>
            <person name="Liang X."/>
            <person name="Jin J."/>
            <person name="Gao L."/>
            <person name="Zheng W."/>
            <person name="Hao B."/>
            <person name="Liu S.-M."/>
            <person name="Wang W."/>
            <person name="Yuan L."/>
            <person name="Cao M."/>
            <person name="McDermott J."/>
            <person name="Samudrala R."/>
            <person name="Wang J."/>
            <person name="Wong G.K.-S."/>
            <person name="Yang H."/>
        </authorList>
    </citation>
    <scope>NUCLEOTIDE SEQUENCE [LARGE SCALE GENOMIC DNA]</scope>
    <source>
        <strain>cv. 93-11</strain>
    </source>
</reference>
<reference key="2">
    <citation type="journal article" date="2007" name="BMC Plant Biol.">
        <title>Genome-wide identification and analyses of the rice calmodulin and related potential calcium sensor proteins.</title>
        <authorList>
            <person name="Boonburapong B."/>
            <person name="Buaboocha T."/>
        </authorList>
    </citation>
    <scope>GENE FAMILY</scope>
    <scope>NOMENCLATURE</scope>
</reference>
<feature type="initiator methionine" description="Removed" evidence="1">
    <location>
        <position position="1"/>
    </location>
</feature>
<feature type="chain" id="PRO_0000338414" description="Calmodulin-2">
    <location>
        <begin position="2"/>
        <end position="149"/>
    </location>
</feature>
<feature type="domain" description="EF-hand 1" evidence="2">
    <location>
        <begin position="8"/>
        <end position="43"/>
    </location>
</feature>
<feature type="domain" description="EF-hand 2" evidence="2">
    <location>
        <begin position="44"/>
        <end position="79"/>
    </location>
</feature>
<feature type="domain" description="EF-hand 3" evidence="2">
    <location>
        <begin position="81"/>
        <end position="116"/>
    </location>
</feature>
<feature type="domain" description="EF-hand 4" evidence="2">
    <location>
        <begin position="117"/>
        <end position="149"/>
    </location>
</feature>
<feature type="binding site" evidence="2">
    <location>
        <position position="21"/>
    </location>
    <ligand>
        <name>Ca(2+)</name>
        <dbReference type="ChEBI" id="CHEBI:29108"/>
        <label>1</label>
    </ligand>
</feature>
<feature type="binding site" evidence="2">
    <location>
        <position position="23"/>
    </location>
    <ligand>
        <name>Ca(2+)</name>
        <dbReference type="ChEBI" id="CHEBI:29108"/>
        <label>1</label>
    </ligand>
</feature>
<feature type="binding site" evidence="2">
    <location>
        <position position="25"/>
    </location>
    <ligand>
        <name>Ca(2+)</name>
        <dbReference type="ChEBI" id="CHEBI:29108"/>
        <label>1</label>
    </ligand>
</feature>
<feature type="binding site" evidence="2">
    <location>
        <position position="27"/>
    </location>
    <ligand>
        <name>Ca(2+)</name>
        <dbReference type="ChEBI" id="CHEBI:29108"/>
        <label>1</label>
    </ligand>
</feature>
<feature type="binding site" evidence="2">
    <location>
        <position position="32"/>
    </location>
    <ligand>
        <name>Ca(2+)</name>
        <dbReference type="ChEBI" id="CHEBI:29108"/>
        <label>1</label>
    </ligand>
</feature>
<feature type="binding site" evidence="2">
    <location>
        <position position="57"/>
    </location>
    <ligand>
        <name>Ca(2+)</name>
        <dbReference type="ChEBI" id="CHEBI:29108"/>
        <label>2</label>
    </ligand>
</feature>
<feature type="binding site" evidence="2">
    <location>
        <position position="59"/>
    </location>
    <ligand>
        <name>Ca(2+)</name>
        <dbReference type="ChEBI" id="CHEBI:29108"/>
        <label>2</label>
    </ligand>
</feature>
<feature type="binding site" evidence="2">
    <location>
        <position position="61"/>
    </location>
    <ligand>
        <name>Ca(2+)</name>
        <dbReference type="ChEBI" id="CHEBI:29108"/>
        <label>2</label>
    </ligand>
</feature>
<feature type="binding site" evidence="2">
    <location>
        <position position="63"/>
    </location>
    <ligand>
        <name>Ca(2+)</name>
        <dbReference type="ChEBI" id="CHEBI:29108"/>
        <label>2</label>
    </ligand>
</feature>
<feature type="binding site" evidence="2">
    <location>
        <position position="68"/>
    </location>
    <ligand>
        <name>Ca(2+)</name>
        <dbReference type="ChEBI" id="CHEBI:29108"/>
        <label>2</label>
    </ligand>
</feature>
<feature type="binding site" evidence="2">
    <location>
        <position position="94"/>
    </location>
    <ligand>
        <name>Ca(2+)</name>
        <dbReference type="ChEBI" id="CHEBI:29108"/>
        <label>3</label>
    </ligand>
</feature>
<feature type="binding site" evidence="2">
    <location>
        <position position="96"/>
    </location>
    <ligand>
        <name>Ca(2+)</name>
        <dbReference type="ChEBI" id="CHEBI:29108"/>
        <label>3</label>
    </ligand>
</feature>
<feature type="binding site" evidence="2">
    <location>
        <position position="98"/>
    </location>
    <ligand>
        <name>Ca(2+)</name>
        <dbReference type="ChEBI" id="CHEBI:29108"/>
        <label>3</label>
    </ligand>
</feature>
<feature type="binding site" evidence="2">
    <location>
        <position position="105"/>
    </location>
    <ligand>
        <name>Ca(2+)</name>
        <dbReference type="ChEBI" id="CHEBI:29108"/>
        <label>3</label>
    </ligand>
</feature>
<feature type="binding site" evidence="2">
    <location>
        <position position="130"/>
    </location>
    <ligand>
        <name>Ca(2+)</name>
        <dbReference type="ChEBI" id="CHEBI:29108"/>
        <label>4</label>
    </ligand>
</feature>
<feature type="binding site" evidence="2">
    <location>
        <position position="132"/>
    </location>
    <ligand>
        <name>Ca(2+)</name>
        <dbReference type="ChEBI" id="CHEBI:29108"/>
        <label>4</label>
    </ligand>
</feature>
<feature type="binding site" evidence="2">
    <location>
        <position position="134"/>
    </location>
    <ligand>
        <name>Ca(2+)</name>
        <dbReference type="ChEBI" id="CHEBI:29108"/>
        <label>4</label>
    </ligand>
</feature>
<feature type="binding site" evidence="2">
    <location>
        <position position="136"/>
    </location>
    <ligand>
        <name>Ca(2+)</name>
        <dbReference type="ChEBI" id="CHEBI:29108"/>
        <label>4</label>
    </ligand>
</feature>
<feature type="binding site" evidence="2">
    <location>
        <position position="141"/>
    </location>
    <ligand>
        <name>Ca(2+)</name>
        <dbReference type="ChEBI" id="CHEBI:29108"/>
        <label>4</label>
    </ligand>
</feature>
<feature type="modified residue" description="N-acetylalanine" evidence="1">
    <location>
        <position position="2"/>
    </location>
</feature>
<feature type="modified residue" description="N6,N6,N6-trimethyllysine" evidence="1">
    <location>
        <position position="116"/>
    </location>
</feature>
<keyword id="KW-0007">Acetylation</keyword>
<keyword id="KW-0106">Calcium</keyword>
<keyword id="KW-0479">Metal-binding</keyword>
<keyword id="KW-0488">Methylation</keyword>
<keyword id="KW-1185">Reference proteome</keyword>
<keyword id="KW-0677">Repeat</keyword>